<keyword id="KW-0064">Aspartyl protease</keyword>
<keyword id="KW-0378">Hydrolase</keyword>
<keyword id="KW-0645">Protease</keyword>
<keyword id="KW-1185">Reference proteome</keyword>
<name>FRHD_METTH</name>
<accession>P19497</accession>
<gene>
    <name type="primary">frhD</name>
    <name type="ordered locus">MTH_1299</name>
</gene>
<proteinExistence type="inferred from homology"/>
<organism>
    <name type="scientific">Methanothermobacter thermautotrophicus (strain ATCC 29096 / DSM 1053 / JCM 10044 / NBRC 100330 / Delta H)</name>
    <name type="common">Methanobacterium thermoautotrophicum</name>
    <dbReference type="NCBI Taxonomy" id="187420"/>
    <lineage>
        <taxon>Archaea</taxon>
        <taxon>Methanobacteriati</taxon>
        <taxon>Methanobacteriota</taxon>
        <taxon>Methanomada group</taxon>
        <taxon>Methanobacteria</taxon>
        <taxon>Methanobacteriales</taxon>
        <taxon>Methanobacteriaceae</taxon>
        <taxon>Methanothermobacter</taxon>
    </lineage>
</organism>
<reference key="1">
    <citation type="journal article" date="1990" name="Biochemistry">
        <title>Cloning, sequence determination, and expression of the genes encoding the subunits of the nickel-containing 8-hydroxy-5-deazaflavin reducing hydrogenase from Methanobacterium thermoautotrophicum delta H.</title>
        <authorList>
            <person name="Alex L.A."/>
            <person name="Reeve J.N."/>
            <person name="Orme-Johnson W.H."/>
            <person name="Walsh C.T."/>
        </authorList>
    </citation>
    <scope>NUCLEOTIDE SEQUENCE [GENOMIC DNA]</scope>
    <source>
        <strain>ATCC 29096 / DSM 1053 / JCM 10044 / NBRC 100330 / Delta H</strain>
    </source>
</reference>
<reference key="2">
    <citation type="journal article" date="1997" name="J. Bacteriol.">
        <title>Complete genome sequence of Methanobacterium thermoautotrophicum deltaH: functional analysis and comparative genomics.</title>
        <authorList>
            <person name="Smith D.R."/>
            <person name="Doucette-Stamm L.A."/>
            <person name="Deloughery C."/>
            <person name="Lee H.-M."/>
            <person name="Dubois J."/>
            <person name="Aldredge T."/>
            <person name="Bashirzadeh R."/>
            <person name="Blakely D."/>
            <person name="Cook R."/>
            <person name="Gilbert K."/>
            <person name="Harrison D."/>
            <person name="Hoang L."/>
            <person name="Keagle P."/>
            <person name="Lumm W."/>
            <person name="Pothier B."/>
            <person name="Qiu D."/>
            <person name="Spadafora R."/>
            <person name="Vicare R."/>
            <person name="Wang Y."/>
            <person name="Wierzbowski J."/>
            <person name="Gibson R."/>
            <person name="Jiwani N."/>
            <person name="Caruso A."/>
            <person name="Bush D."/>
            <person name="Safer H."/>
            <person name="Patwell D."/>
            <person name="Prabhakar S."/>
            <person name="McDougall S."/>
            <person name="Shimer G."/>
            <person name="Goyal A."/>
            <person name="Pietrovski S."/>
            <person name="Church G.M."/>
            <person name="Daniels C.J."/>
            <person name="Mao J.-I."/>
            <person name="Rice P."/>
            <person name="Noelling J."/>
            <person name="Reeve J.N."/>
        </authorList>
    </citation>
    <scope>NUCLEOTIDE SEQUENCE [LARGE SCALE GENOMIC DNA]</scope>
    <source>
        <strain>ATCC 29096 / DSM 1053 / JCM 10044 / NBRC 100330 / Delta H</strain>
    </source>
</reference>
<comment type="miscellaneous">
    <text>Does not copurify with the active FRH.</text>
</comment>
<comment type="similarity">
    <text evidence="1">Belongs to the peptidase A31 family.</text>
</comment>
<sequence length="158" mass="17650">MPYDAEILVVGCGNILFKDDGFGPEVIKALEEYFKDREKPDNVMFIDAGTGGPHFVFSLPHEEWKKMIVVDVVEFNAEPGTLRKFDVTEIPKGSYENMHTWPVSQPLHELSEKIDVVVIGCKPKEISAPNVEMGLTPPVKKAIPRAIQMILDEIGVSK</sequence>
<feature type="chain" id="PRO_0000201947" description="Coenzyme F420 hydrogenase subunit delta">
    <location>
        <begin position="1"/>
        <end position="158"/>
    </location>
</feature>
<evidence type="ECO:0000305" key="1"/>
<dbReference type="EMBL" id="J02914">
    <property type="protein sequence ID" value="AAA72188.1"/>
    <property type="molecule type" value="Genomic_DNA"/>
</dbReference>
<dbReference type="EMBL" id="AE000666">
    <property type="protein sequence ID" value="AAB85779.1"/>
    <property type="molecule type" value="Genomic_DNA"/>
</dbReference>
<dbReference type="PIR" id="F69039">
    <property type="entry name" value="F69039"/>
</dbReference>
<dbReference type="RefSeq" id="WP_010876914.1">
    <property type="nucleotide sequence ID" value="NC_000916.1"/>
</dbReference>
<dbReference type="SMR" id="P19497"/>
<dbReference type="FunCoup" id="P19497">
    <property type="interactions" value="4"/>
</dbReference>
<dbReference type="STRING" id="187420.MTH_1299"/>
<dbReference type="PaxDb" id="187420-MTH_1299"/>
<dbReference type="EnsemblBacteria" id="AAB85779">
    <property type="protein sequence ID" value="AAB85779"/>
    <property type="gene ID" value="MTH_1299"/>
</dbReference>
<dbReference type="GeneID" id="82297737"/>
<dbReference type="KEGG" id="mth:MTH_1299"/>
<dbReference type="PATRIC" id="fig|187420.15.peg.1270"/>
<dbReference type="HOGENOM" id="CLU_099037_0_2_2"/>
<dbReference type="InParanoid" id="P19497"/>
<dbReference type="Proteomes" id="UP000005223">
    <property type="component" value="Chromosome"/>
</dbReference>
<dbReference type="GO" id="GO:0004190">
    <property type="term" value="F:aspartic-type endopeptidase activity"/>
    <property type="evidence" value="ECO:0007669"/>
    <property type="project" value="UniProtKB-KW"/>
</dbReference>
<dbReference type="GO" id="GO:0008047">
    <property type="term" value="F:enzyme activator activity"/>
    <property type="evidence" value="ECO:0007669"/>
    <property type="project" value="InterPro"/>
</dbReference>
<dbReference type="GO" id="GO:0036211">
    <property type="term" value="P:protein modification process"/>
    <property type="evidence" value="ECO:0007669"/>
    <property type="project" value="InterPro"/>
</dbReference>
<dbReference type="GO" id="GO:0016485">
    <property type="term" value="P:protein processing"/>
    <property type="evidence" value="ECO:0007669"/>
    <property type="project" value="TreeGrafter"/>
</dbReference>
<dbReference type="CDD" id="cd06064">
    <property type="entry name" value="H2MP_F420-Reduc"/>
    <property type="match status" value="1"/>
</dbReference>
<dbReference type="Gene3D" id="3.40.50.1450">
    <property type="entry name" value="HybD-like"/>
    <property type="match status" value="1"/>
</dbReference>
<dbReference type="InterPro" id="IPR004411">
    <property type="entry name" value="Pept_A31_F420-red_hyd_d"/>
</dbReference>
<dbReference type="InterPro" id="IPR023430">
    <property type="entry name" value="Pept_HybD-like_dom_sf"/>
</dbReference>
<dbReference type="InterPro" id="IPR000671">
    <property type="entry name" value="Peptidase_A31"/>
</dbReference>
<dbReference type="NCBIfam" id="TIGR00130">
    <property type="entry name" value="frhD"/>
    <property type="match status" value="1"/>
</dbReference>
<dbReference type="NCBIfam" id="TIGR00072">
    <property type="entry name" value="hydrog_prot"/>
    <property type="match status" value="1"/>
</dbReference>
<dbReference type="PANTHER" id="PTHR30302">
    <property type="entry name" value="HYDROGENASE 1 MATURATION PROTEASE"/>
    <property type="match status" value="1"/>
</dbReference>
<dbReference type="PANTHER" id="PTHR30302:SF1">
    <property type="entry name" value="HYDROGENASE 2 MATURATION PROTEASE"/>
    <property type="match status" value="1"/>
</dbReference>
<dbReference type="Pfam" id="PF01750">
    <property type="entry name" value="HycI"/>
    <property type="match status" value="1"/>
</dbReference>
<dbReference type="PRINTS" id="PR00446">
    <property type="entry name" value="HYDRGNUPTAKE"/>
</dbReference>
<dbReference type="SUPFAM" id="SSF53163">
    <property type="entry name" value="HybD-like"/>
    <property type="match status" value="1"/>
</dbReference>
<protein>
    <recommendedName>
        <fullName>Coenzyme F420 hydrogenase subunit delta</fullName>
    </recommendedName>
    <alternativeName>
        <fullName>Putative coenzyme F420 hydrogenase-processing subunit</fullName>
    </alternativeName>
</protein>